<sequence>MSRHPEVKWAQRIDKVYITVQLADAKDAKVNLEPEGVFSFSATAGTDGNLYESKLELNDKVNVEESKISVGVRSIFCIVEKAEAKWWKKLVRDDQKAPHFVKVDWDKWVDEDDDGADVNVDGMDFSNFGGMGGMGGMGGMGDMMGGMGGMGGMGGMAEMMGGMGGMGGMGGMGGMDEFEDESDDEEEVSKPQDAEKAAEAGKSQESDAKAETS</sequence>
<comment type="similarity">
    <text evidence="1">Belongs to the p23/wos2 family.</text>
</comment>
<gene>
    <name type="ordered locus">Os08g0359500</name>
    <name type="ordered locus">LOC_Os08g27070</name>
    <name type="ORF">OJ1014_E02.2</name>
    <name type="ORF">OsJ_025957</name>
    <name type="ORF">P0488B06.44</name>
</gene>
<evidence type="ECO:0000255" key="1"/>
<evidence type="ECO:0000255" key="2">
    <source>
        <dbReference type="PROSITE-ProRule" id="PRU00547"/>
    </source>
</evidence>
<evidence type="ECO:0000256" key="3">
    <source>
        <dbReference type="SAM" id="MobiDB-lite"/>
    </source>
</evidence>
<evidence type="ECO:0000269" key="4">
    <source>
    </source>
</evidence>
<evidence type="ECO:0000269" key="5">
    <source>
    </source>
</evidence>
<evidence type="ECO:0000312" key="6">
    <source>
        <dbReference type="EMBL" id="BAD03784.1"/>
    </source>
</evidence>
<protein>
    <recommendedName>
        <fullName>Uncharacterized protein Os08g0359500</fullName>
    </recommendedName>
</protein>
<name>Y8359_ORYSJ</name>
<dbReference type="EMBL" id="AP005523">
    <property type="protein sequence ID" value="BAD03784.1"/>
    <property type="molecule type" value="Genomic_DNA"/>
</dbReference>
<dbReference type="EMBL" id="AP005628">
    <property type="protein sequence ID" value="BAD03808.1"/>
    <property type="molecule type" value="Genomic_DNA"/>
</dbReference>
<dbReference type="EMBL" id="AP008214">
    <property type="protein sequence ID" value="BAF23545.1"/>
    <property type="molecule type" value="Genomic_DNA"/>
</dbReference>
<dbReference type="EMBL" id="AP014964">
    <property type="protein sequence ID" value="BAT05099.1"/>
    <property type="molecule type" value="Genomic_DNA"/>
</dbReference>
<dbReference type="EMBL" id="CM000145">
    <property type="protein sequence ID" value="EAZ42474.1"/>
    <property type="molecule type" value="Genomic_DNA"/>
</dbReference>
<dbReference type="EMBL" id="AK104798">
    <property type="protein sequence ID" value="BAG96959.1"/>
    <property type="molecule type" value="mRNA"/>
</dbReference>
<dbReference type="EMBL" id="AK112034">
    <property type="protein sequence ID" value="BAG99524.1"/>
    <property type="molecule type" value="mRNA"/>
</dbReference>
<dbReference type="RefSeq" id="XP_015650962.1">
    <property type="nucleotide sequence ID" value="XM_015795476.1"/>
</dbReference>
<dbReference type="SMR" id="Q6YYB0"/>
<dbReference type="FunCoup" id="Q6YYB0">
    <property type="interactions" value="2765"/>
</dbReference>
<dbReference type="STRING" id="39947.Q6YYB0"/>
<dbReference type="PaxDb" id="39947-Q6YYB0"/>
<dbReference type="EnsemblPlants" id="Os08t0359500-01">
    <property type="protein sequence ID" value="Os08t0359500-01"/>
    <property type="gene ID" value="Os08g0359500"/>
</dbReference>
<dbReference type="Gramene" id="Os08t0359500-01">
    <property type="protein sequence ID" value="Os08t0359500-01"/>
    <property type="gene ID" value="Os08g0359500"/>
</dbReference>
<dbReference type="KEGG" id="dosa:Os08g0359500"/>
<dbReference type="eggNOG" id="KOG3158">
    <property type="taxonomic scope" value="Eukaryota"/>
</dbReference>
<dbReference type="HOGENOM" id="CLU_078883_2_1_1"/>
<dbReference type="InParanoid" id="Q6YYB0"/>
<dbReference type="OMA" id="WWTKLLR"/>
<dbReference type="OrthoDB" id="1564555at2759"/>
<dbReference type="Proteomes" id="UP000000763">
    <property type="component" value="Chromosome 8"/>
</dbReference>
<dbReference type="Proteomes" id="UP000007752">
    <property type="component" value="Chromosome 8"/>
</dbReference>
<dbReference type="Proteomes" id="UP000059680">
    <property type="component" value="Chromosome 8"/>
</dbReference>
<dbReference type="GO" id="GO:0005829">
    <property type="term" value="C:cytosol"/>
    <property type="evidence" value="ECO:0000318"/>
    <property type="project" value="GO_Central"/>
</dbReference>
<dbReference type="GO" id="GO:0005634">
    <property type="term" value="C:nucleus"/>
    <property type="evidence" value="ECO:0000318"/>
    <property type="project" value="GO_Central"/>
</dbReference>
<dbReference type="GO" id="GO:0101031">
    <property type="term" value="C:protein folding chaperone complex"/>
    <property type="evidence" value="ECO:0007669"/>
    <property type="project" value="EnsemblPlants"/>
</dbReference>
<dbReference type="GO" id="GO:0051879">
    <property type="term" value="F:Hsp90 protein binding"/>
    <property type="evidence" value="ECO:0000318"/>
    <property type="project" value="GO_Central"/>
</dbReference>
<dbReference type="GO" id="GO:0051087">
    <property type="term" value="F:protein-folding chaperone binding"/>
    <property type="evidence" value="ECO:0000318"/>
    <property type="project" value="GO_Central"/>
</dbReference>
<dbReference type="GO" id="GO:0051085">
    <property type="term" value="P:chaperone cofactor-dependent protein refolding"/>
    <property type="evidence" value="ECO:0007669"/>
    <property type="project" value="EnsemblPlants"/>
</dbReference>
<dbReference type="GO" id="GO:0051131">
    <property type="term" value="P:chaperone-mediated protein complex assembly"/>
    <property type="evidence" value="ECO:0000318"/>
    <property type="project" value="GO_Central"/>
</dbReference>
<dbReference type="GO" id="GO:0080037">
    <property type="term" value="P:negative regulation of cytokinin-activated signaling pathway"/>
    <property type="evidence" value="ECO:0007669"/>
    <property type="project" value="EnsemblPlants"/>
</dbReference>
<dbReference type="GO" id="GO:0010628">
    <property type="term" value="P:positive regulation of gene expression"/>
    <property type="evidence" value="ECO:0007669"/>
    <property type="project" value="EnsemblPlants"/>
</dbReference>
<dbReference type="GO" id="GO:0006457">
    <property type="term" value="P:protein folding"/>
    <property type="evidence" value="ECO:0000318"/>
    <property type="project" value="GO_Central"/>
</dbReference>
<dbReference type="GO" id="GO:2000012">
    <property type="term" value="P:regulation of auxin polar transport"/>
    <property type="evidence" value="ECO:0007669"/>
    <property type="project" value="EnsemblPlants"/>
</dbReference>
<dbReference type="GO" id="GO:0009408">
    <property type="term" value="P:response to heat"/>
    <property type="evidence" value="ECO:0007669"/>
    <property type="project" value="EnsemblPlants"/>
</dbReference>
<dbReference type="GO" id="GO:0010449">
    <property type="term" value="P:root meristem growth"/>
    <property type="evidence" value="ECO:0007669"/>
    <property type="project" value="EnsemblPlants"/>
</dbReference>
<dbReference type="CDD" id="cd06465">
    <property type="entry name" value="p23_hB-ind1_like"/>
    <property type="match status" value="1"/>
</dbReference>
<dbReference type="FunFam" id="2.60.40.790:FF:000013">
    <property type="entry name" value="Very-long-chain (3R)-3-hydroxyacyl-CoA dehydratase"/>
    <property type="match status" value="1"/>
</dbReference>
<dbReference type="Gene3D" id="2.60.40.790">
    <property type="match status" value="1"/>
</dbReference>
<dbReference type="InterPro" id="IPR007052">
    <property type="entry name" value="CS_dom"/>
</dbReference>
<dbReference type="InterPro" id="IPR008978">
    <property type="entry name" value="HSP20-like_chaperone"/>
</dbReference>
<dbReference type="InterPro" id="IPR045250">
    <property type="entry name" value="p23-like"/>
</dbReference>
<dbReference type="PANTHER" id="PTHR22932:SF22">
    <property type="entry name" value="CO-CHAPERONE PROTEIN P23"/>
    <property type="match status" value="1"/>
</dbReference>
<dbReference type="PANTHER" id="PTHR22932">
    <property type="entry name" value="TELOMERASE-BINDING PROTEIN P23 HSP90 CO-CHAPERONE"/>
    <property type="match status" value="1"/>
</dbReference>
<dbReference type="Pfam" id="PF04969">
    <property type="entry name" value="CS"/>
    <property type="match status" value="1"/>
</dbReference>
<dbReference type="SUPFAM" id="SSF49764">
    <property type="entry name" value="HSP20-like chaperones"/>
    <property type="match status" value="1"/>
</dbReference>
<dbReference type="PROSITE" id="PS51203">
    <property type="entry name" value="CS"/>
    <property type="match status" value="1"/>
</dbReference>
<keyword id="KW-1185">Reference proteome</keyword>
<organism>
    <name type="scientific">Oryza sativa subsp. japonica</name>
    <name type="common">Rice</name>
    <dbReference type="NCBI Taxonomy" id="39947"/>
    <lineage>
        <taxon>Eukaryota</taxon>
        <taxon>Viridiplantae</taxon>
        <taxon>Streptophyta</taxon>
        <taxon>Embryophyta</taxon>
        <taxon>Tracheophyta</taxon>
        <taxon>Spermatophyta</taxon>
        <taxon>Magnoliopsida</taxon>
        <taxon>Liliopsida</taxon>
        <taxon>Poales</taxon>
        <taxon>Poaceae</taxon>
        <taxon>BOP clade</taxon>
        <taxon>Oryzoideae</taxon>
        <taxon>Oryzeae</taxon>
        <taxon>Oryzinae</taxon>
        <taxon>Oryza</taxon>
        <taxon>Oryza sativa</taxon>
    </lineage>
</organism>
<feature type="chain" id="PRO_0000361771" description="Uncharacterized protein Os08g0359500">
    <location>
        <begin position="1"/>
        <end position="213"/>
    </location>
</feature>
<feature type="domain" description="CS" evidence="2">
    <location>
        <begin position="2"/>
        <end position="91"/>
    </location>
</feature>
<feature type="region of interest" description="Disordered" evidence="3">
    <location>
        <begin position="168"/>
        <end position="213"/>
    </location>
</feature>
<feature type="compositionally biased region" description="Acidic residues" evidence="3">
    <location>
        <begin position="176"/>
        <end position="187"/>
    </location>
</feature>
<feature type="compositionally biased region" description="Basic and acidic residues" evidence="3">
    <location>
        <begin position="188"/>
        <end position="213"/>
    </location>
</feature>
<accession>Q6YYB0</accession>
<accession>A0A0P0XEY2</accession>
<proteinExistence type="evidence at transcript level"/>
<reference evidence="6" key="1">
    <citation type="journal article" date="2005" name="Nature">
        <title>The map-based sequence of the rice genome.</title>
        <authorList>
            <consortium name="International rice genome sequencing project (IRGSP)"/>
        </authorList>
    </citation>
    <scope>NUCLEOTIDE SEQUENCE [LARGE SCALE GENOMIC DNA]</scope>
    <source>
        <strain evidence="5">cv. Nipponbare</strain>
    </source>
</reference>
<reference key="2">
    <citation type="journal article" date="2008" name="Nucleic Acids Res.">
        <title>The rice annotation project database (RAP-DB): 2008 update.</title>
        <authorList>
            <consortium name="The rice annotation project (RAP)"/>
        </authorList>
    </citation>
    <scope>GENOME REANNOTATION</scope>
    <source>
        <strain>cv. Nipponbare</strain>
    </source>
</reference>
<reference key="3">
    <citation type="journal article" date="2013" name="Rice">
        <title>Improvement of the Oryza sativa Nipponbare reference genome using next generation sequence and optical map data.</title>
        <authorList>
            <person name="Kawahara Y."/>
            <person name="de la Bastide M."/>
            <person name="Hamilton J.P."/>
            <person name="Kanamori H."/>
            <person name="McCombie W.R."/>
            <person name="Ouyang S."/>
            <person name="Schwartz D.C."/>
            <person name="Tanaka T."/>
            <person name="Wu J."/>
            <person name="Zhou S."/>
            <person name="Childs K.L."/>
            <person name="Davidson R.M."/>
            <person name="Lin H."/>
            <person name="Quesada-Ocampo L."/>
            <person name="Vaillancourt B."/>
            <person name="Sakai H."/>
            <person name="Lee S.S."/>
            <person name="Kim J."/>
            <person name="Numa H."/>
            <person name="Itoh T."/>
            <person name="Buell C.R."/>
            <person name="Matsumoto T."/>
        </authorList>
    </citation>
    <scope>GENOME REANNOTATION</scope>
    <source>
        <strain>cv. Nipponbare</strain>
    </source>
</reference>
<reference key="4">
    <citation type="journal article" date="2005" name="PLoS Biol.">
        <title>The genomes of Oryza sativa: a history of duplications.</title>
        <authorList>
            <person name="Yu J."/>
            <person name="Wang J."/>
            <person name="Lin W."/>
            <person name="Li S."/>
            <person name="Li H."/>
            <person name="Zhou J."/>
            <person name="Ni P."/>
            <person name="Dong W."/>
            <person name="Hu S."/>
            <person name="Zeng C."/>
            <person name="Zhang J."/>
            <person name="Zhang Y."/>
            <person name="Li R."/>
            <person name="Xu Z."/>
            <person name="Li S."/>
            <person name="Li X."/>
            <person name="Zheng H."/>
            <person name="Cong L."/>
            <person name="Lin L."/>
            <person name="Yin J."/>
            <person name="Geng J."/>
            <person name="Li G."/>
            <person name="Shi J."/>
            <person name="Liu J."/>
            <person name="Lv H."/>
            <person name="Li J."/>
            <person name="Wang J."/>
            <person name="Deng Y."/>
            <person name="Ran L."/>
            <person name="Shi X."/>
            <person name="Wang X."/>
            <person name="Wu Q."/>
            <person name="Li C."/>
            <person name="Ren X."/>
            <person name="Wang J."/>
            <person name="Wang X."/>
            <person name="Li D."/>
            <person name="Liu D."/>
            <person name="Zhang X."/>
            <person name="Ji Z."/>
            <person name="Zhao W."/>
            <person name="Sun Y."/>
            <person name="Zhang Z."/>
            <person name="Bao J."/>
            <person name="Han Y."/>
            <person name="Dong L."/>
            <person name="Ji J."/>
            <person name="Chen P."/>
            <person name="Wu S."/>
            <person name="Liu J."/>
            <person name="Xiao Y."/>
            <person name="Bu D."/>
            <person name="Tan J."/>
            <person name="Yang L."/>
            <person name="Ye C."/>
            <person name="Zhang J."/>
            <person name="Xu J."/>
            <person name="Zhou Y."/>
            <person name="Yu Y."/>
            <person name="Zhang B."/>
            <person name="Zhuang S."/>
            <person name="Wei H."/>
            <person name="Liu B."/>
            <person name="Lei M."/>
            <person name="Yu H."/>
            <person name="Li Y."/>
            <person name="Xu H."/>
            <person name="Wei S."/>
            <person name="He X."/>
            <person name="Fang L."/>
            <person name="Zhang Z."/>
            <person name="Zhang Y."/>
            <person name="Huang X."/>
            <person name="Su Z."/>
            <person name="Tong W."/>
            <person name="Li J."/>
            <person name="Tong Z."/>
            <person name="Li S."/>
            <person name="Ye J."/>
            <person name="Wang L."/>
            <person name="Fang L."/>
            <person name="Lei T."/>
            <person name="Chen C.-S."/>
            <person name="Chen H.-C."/>
            <person name="Xu Z."/>
            <person name="Li H."/>
            <person name="Huang H."/>
            <person name="Zhang F."/>
            <person name="Xu H."/>
            <person name="Li N."/>
            <person name="Zhao C."/>
            <person name="Li S."/>
            <person name="Dong L."/>
            <person name="Huang Y."/>
            <person name="Li L."/>
            <person name="Xi Y."/>
            <person name="Qi Q."/>
            <person name="Li W."/>
            <person name="Zhang B."/>
            <person name="Hu W."/>
            <person name="Zhang Y."/>
            <person name="Tian X."/>
            <person name="Jiao Y."/>
            <person name="Liang X."/>
            <person name="Jin J."/>
            <person name="Gao L."/>
            <person name="Zheng W."/>
            <person name="Hao B."/>
            <person name="Liu S.-M."/>
            <person name="Wang W."/>
            <person name="Yuan L."/>
            <person name="Cao M."/>
            <person name="McDermott J."/>
            <person name="Samudrala R."/>
            <person name="Wang J."/>
            <person name="Wong G.K.-S."/>
            <person name="Yang H."/>
        </authorList>
    </citation>
    <scope>NUCLEOTIDE SEQUENCE [LARGE SCALE GENOMIC DNA]</scope>
    <source>
        <strain evidence="4">cv. Nipponbare</strain>
    </source>
</reference>
<reference key="5">
    <citation type="journal article" date="2003" name="Science">
        <title>Collection, mapping, and annotation of over 28,000 cDNA clones from japonica rice.</title>
        <authorList>
            <consortium name="The rice full-length cDNA consortium"/>
        </authorList>
    </citation>
    <scope>NUCLEOTIDE SEQUENCE [LARGE SCALE MRNA]</scope>
    <source>
        <strain>cv. Nipponbare</strain>
    </source>
</reference>